<feature type="chain" id="PRO_0000190917" description="Tetraacyldisaccharide 4'-kinase">
    <location>
        <begin position="1"/>
        <end position="333"/>
    </location>
</feature>
<feature type="binding site" evidence="1">
    <location>
        <begin position="55"/>
        <end position="62"/>
    </location>
    <ligand>
        <name>ATP</name>
        <dbReference type="ChEBI" id="CHEBI:30616"/>
    </ligand>
</feature>
<reference key="1">
    <citation type="journal article" date="2003" name="Proc. Natl. Acad. Sci. U.S.A.">
        <title>The genome sequence of Blochmannia floridanus: comparative analysis of reduced genomes.</title>
        <authorList>
            <person name="Gil R."/>
            <person name="Silva F.J."/>
            <person name="Zientz E."/>
            <person name="Delmotte F."/>
            <person name="Gonzalez-Candelas F."/>
            <person name="Latorre A."/>
            <person name="Rausell C."/>
            <person name="Kamerbeek J."/>
            <person name="Gadau J."/>
            <person name="Hoelldobler B."/>
            <person name="van Ham R.C.H.J."/>
            <person name="Gross R."/>
            <person name="Moya A."/>
        </authorList>
    </citation>
    <scope>NUCLEOTIDE SEQUENCE [LARGE SCALE GENOMIC DNA]</scope>
</reference>
<protein>
    <recommendedName>
        <fullName evidence="1">Tetraacyldisaccharide 4'-kinase</fullName>
        <ecNumber evidence="1">2.7.1.130</ecNumber>
    </recommendedName>
    <alternativeName>
        <fullName evidence="1">Lipid A 4'-kinase</fullName>
    </alternativeName>
</protein>
<evidence type="ECO:0000255" key="1">
    <source>
        <dbReference type="HAMAP-Rule" id="MF_00409"/>
    </source>
</evidence>
<proteinExistence type="inferred from homology"/>
<sequence length="333" mass="38106">MLFNIWFGSSLCYLFLLPFSWVYGFFSTLNRISYKYGWRKVYRFSVPIIVIGNLTIGGNGKTPMVLWLIDQLKTRGWRVGVVSRGYGGRSDKYPIIINSTSCSKKCGDEPLLIWRRTGVLVSVSPNRVKAVSALLKKQPLLDIIISDDGLQHYALFRDIEWVVVHSLRRFGNGCWLPAGPMRERITRLNTVQAIIINGLSNDIQSGAILMQLCPRSIINLVTGEIRPIQPLKDVVAIAGIGYPKQFFMTLQDYGIFPIKTIEFSDHHMYSEIMLSSLTSGNEMLLMTEKDAIKCLDFAHENWWYVHIDVNIHQEDTKKLLSKIESTIQYYKNN</sequence>
<name>LPXK_BLOFL</name>
<organism>
    <name type="scientific">Blochmanniella floridana</name>
    <dbReference type="NCBI Taxonomy" id="203907"/>
    <lineage>
        <taxon>Bacteria</taxon>
        <taxon>Pseudomonadati</taxon>
        <taxon>Pseudomonadota</taxon>
        <taxon>Gammaproteobacteria</taxon>
        <taxon>Enterobacterales</taxon>
        <taxon>Enterobacteriaceae</taxon>
        <taxon>ant endosymbionts</taxon>
        <taxon>Candidatus Blochmanniella</taxon>
    </lineage>
</organism>
<comment type="function">
    <text evidence="1">Transfers the gamma-phosphate of ATP to the 4'-position of a tetraacyldisaccharide 1-phosphate intermediate (termed DS-1-P) to form tetraacyldisaccharide 1,4'-bis-phosphate (lipid IVA).</text>
</comment>
<comment type="catalytic activity">
    <reaction evidence="1">
        <text>a lipid A disaccharide + ATP = a lipid IVA + ADP + H(+)</text>
        <dbReference type="Rhea" id="RHEA:67840"/>
        <dbReference type="ChEBI" id="CHEBI:15378"/>
        <dbReference type="ChEBI" id="CHEBI:30616"/>
        <dbReference type="ChEBI" id="CHEBI:176343"/>
        <dbReference type="ChEBI" id="CHEBI:176425"/>
        <dbReference type="ChEBI" id="CHEBI:456216"/>
        <dbReference type="EC" id="2.7.1.130"/>
    </reaction>
</comment>
<comment type="pathway">
    <text evidence="1">Glycolipid biosynthesis; lipid IV(A) biosynthesis; lipid IV(A) from (3R)-3-hydroxytetradecanoyl-[acyl-carrier-protein] and UDP-N-acetyl-alpha-D-glucosamine: step 6/6.</text>
</comment>
<comment type="similarity">
    <text evidence="1">Belongs to the LpxK family.</text>
</comment>
<dbReference type="EC" id="2.7.1.130" evidence="1"/>
<dbReference type="EMBL" id="BX248583">
    <property type="protein sequence ID" value="CAD83444.1"/>
    <property type="molecule type" value="Genomic_DNA"/>
</dbReference>
<dbReference type="SMR" id="Q7VR45"/>
<dbReference type="STRING" id="203907.Bfl378"/>
<dbReference type="KEGG" id="bfl:Bfl378"/>
<dbReference type="eggNOG" id="COG1663">
    <property type="taxonomic scope" value="Bacteria"/>
</dbReference>
<dbReference type="HOGENOM" id="CLU_038816_2_0_6"/>
<dbReference type="OrthoDB" id="9766423at2"/>
<dbReference type="UniPathway" id="UPA00359">
    <property type="reaction ID" value="UER00482"/>
</dbReference>
<dbReference type="Proteomes" id="UP000002192">
    <property type="component" value="Chromosome"/>
</dbReference>
<dbReference type="GO" id="GO:0005886">
    <property type="term" value="C:plasma membrane"/>
    <property type="evidence" value="ECO:0007669"/>
    <property type="project" value="TreeGrafter"/>
</dbReference>
<dbReference type="GO" id="GO:0005524">
    <property type="term" value="F:ATP binding"/>
    <property type="evidence" value="ECO:0007669"/>
    <property type="project" value="UniProtKB-UniRule"/>
</dbReference>
<dbReference type="GO" id="GO:0009029">
    <property type="term" value="F:tetraacyldisaccharide 4'-kinase activity"/>
    <property type="evidence" value="ECO:0007669"/>
    <property type="project" value="UniProtKB-UniRule"/>
</dbReference>
<dbReference type="GO" id="GO:0009245">
    <property type="term" value="P:lipid A biosynthetic process"/>
    <property type="evidence" value="ECO:0007669"/>
    <property type="project" value="UniProtKB-UniRule"/>
</dbReference>
<dbReference type="GO" id="GO:0009244">
    <property type="term" value="P:lipopolysaccharide core region biosynthetic process"/>
    <property type="evidence" value="ECO:0007669"/>
    <property type="project" value="TreeGrafter"/>
</dbReference>
<dbReference type="HAMAP" id="MF_00409">
    <property type="entry name" value="LpxK"/>
    <property type="match status" value="1"/>
</dbReference>
<dbReference type="InterPro" id="IPR003758">
    <property type="entry name" value="LpxK"/>
</dbReference>
<dbReference type="InterPro" id="IPR027417">
    <property type="entry name" value="P-loop_NTPase"/>
</dbReference>
<dbReference type="NCBIfam" id="TIGR00682">
    <property type="entry name" value="lpxK"/>
    <property type="match status" value="1"/>
</dbReference>
<dbReference type="PANTHER" id="PTHR42724">
    <property type="entry name" value="TETRAACYLDISACCHARIDE 4'-KINASE"/>
    <property type="match status" value="1"/>
</dbReference>
<dbReference type="PANTHER" id="PTHR42724:SF1">
    <property type="entry name" value="TETRAACYLDISACCHARIDE 4'-KINASE, MITOCHONDRIAL-RELATED"/>
    <property type="match status" value="1"/>
</dbReference>
<dbReference type="Pfam" id="PF02606">
    <property type="entry name" value="LpxK"/>
    <property type="match status" value="1"/>
</dbReference>
<dbReference type="SUPFAM" id="SSF52540">
    <property type="entry name" value="P-loop containing nucleoside triphosphate hydrolases"/>
    <property type="match status" value="1"/>
</dbReference>
<keyword id="KW-0067">ATP-binding</keyword>
<keyword id="KW-0418">Kinase</keyword>
<keyword id="KW-0441">Lipid A biosynthesis</keyword>
<keyword id="KW-0444">Lipid biosynthesis</keyword>
<keyword id="KW-0443">Lipid metabolism</keyword>
<keyword id="KW-0547">Nucleotide-binding</keyword>
<keyword id="KW-1185">Reference proteome</keyword>
<keyword id="KW-0808">Transferase</keyword>
<accession>Q7VR45</accession>
<gene>
    <name evidence="1" type="primary">lpxK</name>
    <name type="ordered locus">Bfl378</name>
</gene>